<sequence length="443" mass="48974">MSTTDSIVSSQAKQSSWRKSDTTWTLGLFGTAIGAGVLFFPIRAGFGGLIPILLMLVLAYPIAFYCHRALARLCLSGSNPSGNITETVEEHFGKTGGVVITFLYFFAICPLLWIYGVTITNTFMTFWENQLQMPALNRGFVALFLLLLMAFVIWFGKDLMVKVMSYLVWPFIASLVLISLSLIPYWNSAVIDQVDLSNIALTGHDGILVTVWLGISIMVFSFNFSPIVSSFVVSKREEYEKEFGREFTERKCSQIISRASMLMVAVVMFFAFSCLFTLSPQNMADAKAQNIPVLSYLANHFASLSGTKSTFATVLEYGASIIALVAIFKSFFGHYLGTLEGLNGLVLKFGYKGDKTKVSMGKLNTISMIFIMGSTWVVAYANPNILDLIEAMGAPIIASLLCLLPMYAIRKAPSLAKYRGRLDNVFVTLIGLLTILNIVYKLF</sequence>
<protein>
    <recommendedName>
        <fullName evidence="1">Threonine/serine transporter TdcC</fullName>
    </recommendedName>
    <alternativeName>
        <fullName evidence="1">H(+)/threonine-serine symporter</fullName>
    </alternativeName>
</protein>
<evidence type="ECO:0000255" key="1">
    <source>
        <dbReference type="HAMAP-Rule" id="MF_01583"/>
    </source>
</evidence>
<reference key="1">
    <citation type="journal article" date="2011" name="J. Bacteriol.">
        <title>Comparative genomics of 28 Salmonella enterica isolates: evidence for CRISPR-mediated adaptive sublineage evolution.</title>
        <authorList>
            <person name="Fricke W.F."/>
            <person name="Mammel M.K."/>
            <person name="McDermott P.F."/>
            <person name="Tartera C."/>
            <person name="White D.G."/>
            <person name="Leclerc J.E."/>
            <person name="Ravel J."/>
            <person name="Cebula T.A."/>
        </authorList>
    </citation>
    <scope>NUCLEOTIDE SEQUENCE [LARGE SCALE GENOMIC DNA]</scope>
    <source>
        <strain>SL483</strain>
    </source>
</reference>
<name>TDCC_SALA4</name>
<organism>
    <name type="scientific">Salmonella agona (strain SL483)</name>
    <dbReference type="NCBI Taxonomy" id="454166"/>
    <lineage>
        <taxon>Bacteria</taxon>
        <taxon>Pseudomonadati</taxon>
        <taxon>Pseudomonadota</taxon>
        <taxon>Gammaproteobacteria</taxon>
        <taxon>Enterobacterales</taxon>
        <taxon>Enterobacteriaceae</taxon>
        <taxon>Salmonella</taxon>
    </lineage>
</organism>
<gene>
    <name evidence="1" type="primary">tdcC</name>
    <name type="ordered locus">SeAg_B3431</name>
</gene>
<keyword id="KW-0029">Amino-acid transport</keyword>
<keyword id="KW-0997">Cell inner membrane</keyword>
<keyword id="KW-1003">Cell membrane</keyword>
<keyword id="KW-0472">Membrane</keyword>
<keyword id="KW-0769">Symport</keyword>
<keyword id="KW-0812">Transmembrane</keyword>
<keyword id="KW-1133">Transmembrane helix</keyword>
<keyword id="KW-0813">Transport</keyword>
<proteinExistence type="inferred from homology"/>
<comment type="function">
    <text evidence="1">Involved in the import of threonine and serine into the cell, with the concomitant import of a proton (symport system).</text>
</comment>
<comment type="catalytic activity">
    <reaction evidence="1">
        <text>L-threonine(in) + H(+)(in) = L-threonine(out) + H(+)(out)</text>
        <dbReference type="Rhea" id="RHEA:28883"/>
        <dbReference type="ChEBI" id="CHEBI:15378"/>
        <dbReference type="ChEBI" id="CHEBI:57926"/>
    </reaction>
    <physiologicalReaction direction="right-to-left" evidence="1">
        <dbReference type="Rhea" id="RHEA:28885"/>
    </physiologicalReaction>
</comment>
<comment type="catalytic activity">
    <reaction evidence="1">
        <text>L-serine(in) + H(+)(in) = L-serine(out) + H(+)(out)</text>
        <dbReference type="Rhea" id="RHEA:28887"/>
        <dbReference type="ChEBI" id="CHEBI:15378"/>
        <dbReference type="ChEBI" id="CHEBI:33384"/>
    </reaction>
    <physiologicalReaction direction="right-to-left" evidence="1">
        <dbReference type="Rhea" id="RHEA:28889"/>
    </physiologicalReaction>
</comment>
<comment type="subcellular location">
    <subcellularLocation>
        <location evidence="1">Cell inner membrane</location>
        <topology evidence="1">Multi-pass membrane protein</topology>
    </subcellularLocation>
</comment>
<comment type="similarity">
    <text evidence="1">Belongs to the amino acid/polyamine transporter 2 family. SdaC/TdcC subfamily.</text>
</comment>
<feature type="chain" id="PRO_1000147635" description="Threonine/serine transporter TdcC">
    <location>
        <begin position="1"/>
        <end position="443"/>
    </location>
</feature>
<feature type="transmembrane region" description="Helical" evidence="1">
    <location>
        <begin position="22"/>
        <end position="42"/>
    </location>
</feature>
<feature type="transmembrane region" description="Helical" evidence="1">
    <location>
        <begin position="44"/>
        <end position="64"/>
    </location>
</feature>
<feature type="transmembrane region" description="Helical" evidence="1">
    <location>
        <begin position="97"/>
        <end position="117"/>
    </location>
</feature>
<feature type="transmembrane region" description="Helical" evidence="1">
    <location>
        <begin position="140"/>
        <end position="160"/>
    </location>
</feature>
<feature type="transmembrane region" description="Helical" evidence="1">
    <location>
        <begin position="163"/>
        <end position="183"/>
    </location>
</feature>
<feature type="transmembrane region" description="Helical" evidence="1">
    <location>
        <begin position="207"/>
        <end position="227"/>
    </location>
</feature>
<feature type="transmembrane region" description="Helical" evidence="1">
    <location>
        <begin position="259"/>
        <end position="279"/>
    </location>
</feature>
<feature type="transmembrane region" description="Helical" evidence="1">
    <location>
        <begin position="319"/>
        <end position="339"/>
    </location>
</feature>
<feature type="transmembrane region" description="Helical" evidence="1">
    <location>
        <begin position="366"/>
        <end position="386"/>
    </location>
</feature>
<feature type="transmembrane region" description="Helical" evidence="1">
    <location>
        <begin position="389"/>
        <end position="409"/>
    </location>
</feature>
<feature type="transmembrane region" description="Helical" evidence="1">
    <location>
        <begin position="423"/>
        <end position="443"/>
    </location>
</feature>
<accession>B5F6Q0</accession>
<dbReference type="EMBL" id="CP001138">
    <property type="protein sequence ID" value="ACH50706.1"/>
    <property type="molecule type" value="Genomic_DNA"/>
</dbReference>
<dbReference type="RefSeq" id="WP_000108129.1">
    <property type="nucleotide sequence ID" value="NC_011149.1"/>
</dbReference>
<dbReference type="KEGG" id="sea:SeAg_B3431"/>
<dbReference type="HOGENOM" id="CLU_052043_1_1_6"/>
<dbReference type="Proteomes" id="UP000008819">
    <property type="component" value="Chromosome"/>
</dbReference>
<dbReference type="GO" id="GO:0005886">
    <property type="term" value="C:plasma membrane"/>
    <property type="evidence" value="ECO:0007669"/>
    <property type="project" value="UniProtKB-SubCell"/>
</dbReference>
<dbReference type="GO" id="GO:0015194">
    <property type="term" value="F:L-serine transmembrane transporter activity"/>
    <property type="evidence" value="ECO:0007669"/>
    <property type="project" value="InterPro"/>
</dbReference>
<dbReference type="GO" id="GO:0015293">
    <property type="term" value="F:symporter activity"/>
    <property type="evidence" value="ECO:0007669"/>
    <property type="project" value="UniProtKB-UniRule"/>
</dbReference>
<dbReference type="GO" id="GO:0015565">
    <property type="term" value="F:threonine efflux transmembrane transporter activity"/>
    <property type="evidence" value="ECO:0007669"/>
    <property type="project" value="InterPro"/>
</dbReference>
<dbReference type="Gene3D" id="1.20.1740.10">
    <property type="entry name" value="Amino acid/polyamine transporter I"/>
    <property type="match status" value="1"/>
</dbReference>
<dbReference type="HAMAP" id="MF_01583">
    <property type="entry name" value="Thr_Ser_transp_TdcC"/>
    <property type="match status" value="1"/>
</dbReference>
<dbReference type="InterPro" id="IPR018227">
    <property type="entry name" value="Amino_acid_transport_2"/>
</dbReference>
<dbReference type="InterPro" id="IPR004694">
    <property type="entry name" value="Hydroxy_aa_transpt"/>
</dbReference>
<dbReference type="InterPro" id="IPR023726">
    <property type="entry name" value="Thr/Ser_transpt_TdcC"/>
</dbReference>
<dbReference type="NCBIfam" id="NF010152">
    <property type="entry name" value="PRK13629.1"/>
    <property type="match status" value="1"/>
</dbReference>
<dbReference type="NCBIfam" id="TIGR00814">
    <property type="entry name" value="stp"/>
    <property type="match status" value="1"/>
</dbReference>
<dbReference type="PANTHER" id="PTHR35334">
    <property type="entry name" value="SERINE TRANSPORTER"/>
    <property type="match status" value="1"/>
</dbReference>
<dbReference type="PANTHER" id="PTHR35334:SF1">
    <property type="entry name" value="THREONINE_SERINE TRANSPORTER TDCC"/>
    <property type="match status" value="1"/>
</dbReference>
<dbReference type="Pfam" id="PF03222">
    <property type="entry name" value="Trp_Tyr_perm"/>
    <property type="match status" value="1"/>
</dbReference>